<gene>
    <name evidence="1" type="primary">mgsA</name>
    <name type="ordered locus">SeD_A1151</name>
</gene>
<keyword id="KW-0456">Lyase</keyword>
<comment type="function">
    <text evidence="1">Catalyzes the formation of methylglyoxal from dihydroxyacetone phosphate.</text>
</comment>
<comment type="catalytic activity">
    <reaction evidence="1">
        <text>dihydroxyacetone phosphate = methylglyoxal + phosphate</text>
        <dbReference type="Rhea" id="RHEA:17937"/>
        <dbReference type="ChEBI" id="CHEBI:17158"/>
        <dbReference type="ChEBI" id="CHEBI:43474"/>
        <dbReference type="ChEBI" id="CHEBI:57642"/>
        <dbReference type="EC" id="4.2.3.3"/>
    </reaction>
</comment>
<comment type="similarity">
    <text evidence="1">Belongs to the methylglyoxal synthase family.</text>
</comment>
<accession>B5FR06</accession>
<organism>
    <name type="scientific">Salmonella dublin (strain CT_02021853)</name>
    <dbReference type="NCBI Taxonomy" id="439851"/>
    <lineage>
        <taxon>Bacteria</taxon>
        <taxon>Pseudomonadati</taxon>
        <taxon>Pseudomonadota</taxon>
        <taxon>Gammaproteobacteria</taxon>
        <taxon>Enterobacterales</taxon>
        <taxon>Enterobacteriaceae</taxon>
        <taxon>Salmonella</taxon>
    </lineage>
</organism>
<proteinExistence type="inferred from homology"/>
<evidence type="ECO:0000255" key="1">
    <source>
        <dbReference type="HAMAP-Rule" id="MF_00549"/>
    </source>
</evidence>
<reference key="1">
    <citation type="journal article" date="2011" name="J. Bacteriol.">
        <title>Comparative genomics of 28 Salmonella enterica isolates: evidence for CRISPR-mediated adaptive sublineage evolution.</title>
        <authorList>
            <person name="Fricke W.F."/>
            <person name="Mammel M.K."/>
            <person name="McDermott P.F."/>
            <person name="Tartera C."/>
            <person name="White D.G."/>
            <person name="Leclerc J.E."/>
            <person name="Ravel J."/>
            <person name="Cebula T.A."/>
        </authorList>
    </citation>
    <scope>NUCLEOTIDE SEQUENCE [LARGE SCALE GENOMIC DNA]</scope>
    <source>
        <strain>CT_02021853</strain>
    </source>
</reference>
<feature type="chain" id="PRO_1000129003" description="Methylglyoxal synthase">
    <location>
        <begin position="1"/>
        <end position="152"/>
    </location>
</feature>
<feature type="domain" description="MGS-like" evidence="1">
    <location>
        <begin position="6"/>
        <end position="152"/>
    </location>
</feature>
<feature type="active site" description="Proton donor/acceptor" evidence="1">
    <location>
        <position position="71"/>
    </location>
</feature>
<feature type="binding site" evidence="1">
    <location>
        <position position="19"/>
    </location>
    <ligand>
        <name>substrate</name>
    </ligand>
</feature>
<feature type="binding site" evidence="1">
    <location>
        <position position="23"/>
    </location>
    <ligand>
        <name>substrate</name>
    </ligand>
</feature>
<feature type="binding site" evidence="1">
    <location>
        <begin position="45"/>
        <end position="48"/>
    </location>
    <ligand>
        <name>substrate</name>
    </ligand>
</feature>
<feature type="binding site" evidence="1">
    <location>
        <begin position="65"/>
        <end position="66"/>
    </location>
    <ligand>
        <name>substrate</name>
    </ligand>
</feature>
<feature type="binding site" evidence="1">
    <location>
        <position position="98"/>
    </location>
    <ligand>
        <name>substrate</name>
    </ligand>
</feature>
<dbReference type="EC" id="4.2.3.3" evidence="1"/>
<dbReference type="EMBL" id="CP001144">
    <property type="protein sequence ID" value="ACH75245.1"/>
    <property type="molecule type" value="Genomic_DNA"/>
</dbReference>
<dbReference type="RefSeq" id="WP_000424187.1">
    <property type="nucleotide sequence ID" value="NC_011205.1"/>
</dbReference>
<dbReference type="SMR" id="B5FR06"/>
<dbReference type="KEGG" id="sed:SeD_A1151"/>
<dbReference type="HOGENOM" id="CLU_120420_0_1_6"/>
<dbReference type="Proteomes" id="UP000008322">
    <property type="component" value="Chromosome"/>
</dbReference>
<dbReference type="GO" id="GO:0005829">
    <property type="term" value="C:cytosol"/>
    <property type="evidence" value="ECO:0007669"/>
    <property type="project" value="TreeGrafter"/>
</dbReference>
<dbReference type="GO" id="GO:0008929">
    <property type="term" value="F:methylglyoxal synthase activity"/>
    <property type="evidence" value="ECO:0007669"/>
    <property type="project" value="UniProtKB-UniRule"/>
</dbReference>
<dbReference type="GO" id="GO:0019242">
    <property type="term" value="P:methylglyoxal biosynthetic process"/>
    <property type="evidence" value="ECO:0007669"/>
    <property type="project" value="UniProtKB-UniRule"/>
</dbReference>
<dbReference type="CDD" id="cd01422">
    <property type="entry name" value="MGS"/>
    <property type="match status" value="1"/>
</dbReference>
<dbReference type="FunFam" id="3.40.50.1380:FF:000002">
    <property type="entry name" value="Methylglyoxal synthase"/>
    <property type="match status" value="1"/>
</dbReference>
<dbReference type="Gene3D" id="3.40.50.1380">
    <property type="entry name" value="Methylglyoxal synthase-like domain"/>
    <property type="match status" value="1"/>
</dbReference>
<dbReference type="HAMAP" id="MF_00549">
    <property type="entry name" value="Methylglyoxal_synth"/>
    <property type="match status" value="1"/>
</dbReference>
<dbReference type="InterPro" id="IPR004363">
    <property type="entry name" value="Methylgl_synth"/>
</dbReference>
<dbReference type="InterPro" id="IPR018148">
    <property type="entry name" value="Methylglyoxal_synth_AS"/>
</dbReference>
<dbReference type="InterPro" id="IPR011607">
    <property type="entry name" value="MGS-like_dom"/>
</dbReference>
<dbReference type="InterPro" id="IPR036914">
    <property type="entry name" value="MGS-like_dom_sf"/>
</dbReference>
<dbReference type="NCBIfam" id="TIGR00160">
    <property type="entry name" value="MGSA"/>
    <property type="match status" value="1"/>
</dbReference>
<dbReference type="NCBIfam" id="NF003559">
    <property type="entry name" value="PRK05234.1"/>
    <property type="match status" value="1"/>
</dbReference>
<dbReference type="PANTHER" id="PTHR30492">
    <property type="entry name" value="METHYLGLYOXAL SYNTHASE"/>
    <property type="match status" value="1"/>
</dbReference>
<dbReference type="PANTHER" id="PTHR30492:SF0">
    <property type="entry name" value="METHYLGLYOXAL SYNTHASE"/>
    <property type="match status" value="1"/>
</dbReference>
<dbReference type="Pfam" id="PF02142">
    <property type="entry name" value="MGS"/>
    <property type="match status" value="1"/>
</dbReference>
<dbReference type="PIRSF" id="PIRSF006614">
    <property type="entry name" value="Methylglyox_syn"/>
    <property type="match status" value="1"/>
</dbReference>
<dbReference type="SMART" id="SM00851">
    <property type="entry name" value="MGS"/>
    <property type="match status" value="1"/>
</dbReference>
<dbReference type="SUPFAM" id="SSF52335">
    <property type="entry name" value="Methylglyoxal synthase-like"/>
    <property type="match status" value="1"/>
</dbReference>
<dbReference type="PROSITE" id="PS01335">
    <property type="entry name" value="METHYLGLYOXAL_SYNTH"/>
    <property type="match status" value="1"/>
</dbReference>
<dbReference type="PROSITE" id="PS51855">
    <property type="entry name" value="MGS"/>
    <property type="match status" value="1"/>
</dbReference>
<protein>
    <recommendedName>
        <fullName evidence="1">Methylglyoxal synthase</fullName>
        <shortName evidence="1">MGS</shortName>
        <ecNumber evidence="1">4.2.3.3</ecNumber>
    </recommendedName>
</protein>
<sequence length="152" mass="16991">MELTTRTLPTRKHIALVAHDHCKQMLMNWVERHQPLLEKHVLYATGTTGNLIQRATGMDVNAMLSGPMGGDQQVGALISEGKIDVLIFFWDPLNAVPHDPDVKALLRLATVWNIPVATNVSTADFIIQSPHFNDAVDILIPDYARYLAERLK</sequence>
<name>MGSA_SALDC</name>